<gene>
    <name type="primary">BHLH113</name>
    <name type="synonym">EN61</name>
    <name type="ordered locus">At3g19500</name>
    <name type="ORF">MLD14.24</name>
</gene>
<comment type="subunit">
    <text evidence="3">Homodimer.</text>
</comment>
<comment type="subcellular location">
    <subcellularLocation>
        <location evidence="1">Nucleus</location>
    </subcellularLocation>
</comment>
<feature type="chain" id="PRO_0000358799" description="Transcription factor bHLH113">
    <location>
        <begin position="1"/>
        <end position="270"/>
    </location>
</feature>
<feature type="domain" description="bHLH" evidence="1">
    <location>
        <begin position="144"/>
        <end position="193"/>
    </location>
</feature>
<feature type="region of interest" description="Disordered" evidence="2">
    <location>
        <begin position="109"/>
        <end position="153"/>
    </location>
</feature>
<feature type="sequence conflict" description="In Ref. 3; AAM61088." evidence="3" ref="3">
    <original>E</original>
    <variation>D</variation>
    <location>
        <position position="146"/>
    </location>
</feature>
<sequence length="270" mass="28787">MGDTAEDQDDRAMMEAEGVTSFSELLMFSDGVLSSSSDHQPEGNVGDGGEDSLGFVFSGKTGSRMLCFSGGYQNDDESLFLEPSVPTSGVSDLDPSCIKIDCRNSNDACTVDKSTKSSTKKRTGTGNGQESDQNRKPGKKGKRNQEKSSVGIAKVRKERLGERIAALQQLVSPYGKTDAASVLHEAMGYIKFLQDQIQVLCSPYLINHSLDGGVVTGDVMAAMKAKDLRSRGLCLVPVSSTVHVENSNGADFWSPATMGHTTSPSLPQGF</sequence>
<keyword id="KW-0238">DNA-binding</keyword>
<keyword id="KW-0539">Nucleus</keyword>
<keyword id="KW-1185">Reference proteome</keyword>
<keyword id="KW-0804">Transcription</keyword>
<keyword id="KW-0805">Transcription regulation</keyword>
<dbReference type="EMBL" id="AB025624">
    <property type="protein sequence ID" value="BAB02475.1"/>
    <property type="molecule type" value="Genomic_DNA"/>
</dbReference>
<dbReference type="EMBL" id="CP002686">
    <property type="protein sequence ID" value="AEE76248.1"/>
    <property type="molecule type" value="Genomic_DNA"/>
</dbReference>
<dbReference type="EMBL" id="AY084520">
    <property type="protein sequence ID" value="AAM61088.1"/>
    <property type="molecule type" value="mRNA"/>
</dbReference>
<dbReference type="EMBL" id="AF488631">
    <property type="status" value="NOT_ANNOTATED_CDS"/>
    <property type="molecule type" value="mRNA"/>
</dbReference>
<dbReference type="RefSeq" id="NP_566639.1">
    <property type="nucleotide sequence ID" value="NM_112837.3"/>
</dbReference>
<dbReference type="SMR" id="Q9LT67"/>
<dbReference type="BioGRID" id="6817">
    <property type="interactions" value="2"/>
</dbReference>
<dbReference type="FunCoup" id="Q9LT67">
    <property type="interactions" value="29"/>
</dbReference>
<dbReference type="IntAct" id="Q9LT67">
    <property type="interactions" value="2"/>
</dbReference>
<dbReference type="STRING" id="3702.Q9LT67"/>
<dbReference type="PaxDb" id="3702-AT3G19500.1"/>
<dbReference type="ProteomicsDB" id="240693"/>
<dbReference type="EnsemblPlants" id="AT3G19500.1">
    <property type="protein sequence ID" value="AT3G19500.1"/>
    <property type="gene ID" value="AT3G19500"/>
</dbReference>
<dbReference type="GeneID" id="821484"/>
<dbReference type="Gramene" id="AT3G19500.1">
    <property type="protein sequence ID" value="AT3G19500.1"/>
    <property type="gene ID" value="AT3G19500"/>
</dbReference>
<dbReference type="KEGG" id="ath:AT3G19500"/>
<dbReference type="Araport" id="AT3G19500"/>
<dbReference type="TAIR" id="AT3G19500"/>
<dbReference type="eggNOG" id="ENOG502RXFS">
    <property type="taxonomic scope" value="Eukaryota"/>
</dbReference>
<dbReference type="HOGENOM" id="CLU_041735_2_2_1"/>
<dbReference type="InParanoid" id="Q9LT67"/>
<dbReference type="PhylomeDB" id="Q9LT67"/>
<dbReference type="PRO" id="PR:Q9LT67"/>
<dbReference type="Proteomes" id="UP000006548">
    <property type="component" value="Chromosome 3"/>
</dbReference>
<dbReference type="ExpressionAtlas" id="Q9LT67">
    <property type="expression patterns" value="baseline and differential"/>
</dbReference>
<dbReference type="GO" id="GO:0005634">
    <property type="term" value="C:nucleus"/>
    <property type="evidence" value="ECO:0007669"/>
    <property type="project" value="UniProtKB-SubCell"/>
</dbReference>
<dbReference type="GO" id="GO:0003677">
    <property type="term" value="F:DNA binding"/>
    <property type="evidence" value="ECO:0007669"/>
    <property type="project" value="UniProtKB-KW"/>
</dbReference>
<dbReference type="GO" id="GO:0003700">
    <property type="term" value="F:DNA-binding transcription factor activity"/>
    <property type="evidence" value="ECO:0000250"/>
    <property type="project" value="TAIR"/>
</dbReference>
<dbReference type="GO" id="GO:0046983">
    <property type="term" value="F:protein dimerization activity"/>
    <property type="evidence" value="ECO:0007669"/>
    <property type="project" value="InterPro"/>
</dbReference>
<dbReference type="GO" id="GO:0006355">
    <property type="term" value="P:regulation of DNA-templated transcription"/>
    <property type="evidence" value="ECO:0000304"/>
    <property type="project" value="TAIR"/>
</dbReference>
<dbReference type="CDD" id="cd11393">
    <property type="entry name" value="bHLH_AtbHLH_like"/>
    <property type="match status" value="1"/>
</dbReference>
<dbReference type="FunFam" id="4.10.280.10:FF:000123">
    <property type="entry name" value="Transcription factor bHLH113"/>
    <property type="match status" value="1"/>
</dbReference>
<dbReference type="Gene3D" id="4.10.280.10">
    <property type="entry name" value="Helix-loop-helix DNA-binding domain"/>
    <property type="match status" value="1"/>
</dbReference>
<dbReference type="InterPro" id="IPR045239">
    <property type="entry name" value="bHLH95_bHLH"/>
</dbReference>
<dbReference type="InterPro" id="IPR011598">
    <property type="entry name" value="bHLH_dom"/>
</dbReference>
<dbReference type="InterPro" id="IPR036638">
    <property type="entry name" value="HLH_DNA-bd_sf"/>
</dbReference>
<dbReference type="InterPro" id="IPR045843">
    <property type="entry name" value="IND-like"/>
</dbReference>
<dbReference type="PANTHER" id="PTHR16223:SF335">
    <property type="entry name" value="TRANSCRIPTION FACTOR BHLH113"/>
    <property type="match status" value="1"/>
</dbReference>
<dbReference type="PANTHER" id="PTHR16223">
    <property type="entry name" value="TRANSCRIPTION FACTOR BHLH83-RELATED"/>
    <property type="match status" value="1"/>
</dbReference>
<dbReference type="SUPFAM" id="SSF47459">
    <property type="entry name" value="HLH, helix-loop-helix DNA-binding domain"/>
    <property type="match status" value="1"/>
</dbReference>
<dbReference type="PROSITE" id="PS50888">
    <property type="entry name" value="BHLH"/>
    <property type="match status" value="1"/>
</dbReference>
<accession>Q9LT67</accession>
<accession>Q8LG13</accession>
<proteinExistence type="evidence at transcript level"/>
<protein>
    <recommendedName>
        <fullName>Transcription factor bHLH113</fullName>
    </recommendedName>
    <alternativeName>
        <fullName>Basic helix-loop-helix protein 113</fullName>
        <shortName>AtbHLH113</shortName>
        <shortName>bHLH 113</shortName>
    </alternativeName>
    <alternativeName>
        <fullName>Transcription factor EN 61</fullName>
    </alternativeName>
    <alternativeName>
        <fullName>bHLH transcription factor bHLH113</fullName>
    </alternativeName>
</protein>
<evidence type="ECO:0000255" key="1">
    <source>
        <dbReference type="PROSITE-ProRule" id="PRU00981"/>
    </source>
</evidence>
<evidence type="ECO:0000256" key="2">
    <source>
        <dbReference type="SAM" id="MobiDB-lite"/>
    </source>
</evidence>
<evidence type="ECO:0000305" key="3"/>
<organism>
    <name type="scientific">Arabidopsis thaliana</name>
    <name type="common">Mouse-ear cress</name>
    <dbReference type="NCBI Taxonomy" id="3702"/>
    <lineage>
        <taxon>Eukaryota</taxon>
        <taxon>Viridiplantae</taxon>
        <taxon>Streptophyta</taxon>
        <taxon>Embryophyta</taxon>
        <taxon>Tracheophyta</taxon>
        <taxon>Spermatophyta</taxon>
        <taxon>Magnoliopsida</taxon>
        <taxon>eudicotyledons</taxon>
        <taxon>Gunneridae</taxon>
        <taxon>Pentapetalae</taxon>
        <taxon>rosids</taxon>
        <taxon>malvids</taxon>
        <taxon>Brassicales</taxon>
        <taxon>Brassicaceae</taxon>
        <taxon>Camelineae</taxon>
        <taxon>Arabidopsis</taxon>
    </lineage>
</organism>
<name>BH113_ARATH</name>
<reference key="1">
    <citation type="journal article" date="2000" name="DNA Res.">
        <title>Structural analysis of Arabidopsis thaliana chromosome 3. I. Sequence features of the regions of 4,504,864 bp covered by sixty P1 and TAC clones.</title>
        <authorList>
            <person name="Sato S."/>
            <person name="Nakamura Y."/>
            <person name="Kaneko T."/>
            <person name="Katoh T."/>
            <person name="Asamizu E."/>
            <person name="Tabata S."/>
        </authorList>
    </citation>
    <scope>NUCLEOTIDE SEQUENCE [LARGE SCALE GENOMIC DNA]</scope>
    <source>
        <strain>cv. Columbia</strain>
    </source>
</reference>
<reference key="2">
    <citation type="journal article" date="2017" name="Plant J.">
        <title>Araport11: a complete reannotation of the Arabidopsis thaliana reference genome.</title>
        <authorList>
            <person name="Cheng C.Y."/>
            <person name="Krishnakumar V."/>
            <person name="Chan A.P."/>
            <person name="Thibaud-Nissen F."/>
            <person name="Schobel S."/>
            <person name="Town C.D."/>
        </authorList>
    </citation>
    <scope>GENOME REANNOTATION</scope>
    <source>
        <strain>cv. Columbia</strain>
    </source>
</reference>
<reference key="3">
    <citation type="submission" date="2002-03" db="EMBL/GenBank/DDBJ databases">
        <title>Full-length cDNA from Arabidopsis thaliana.</title>
        <authorList>
            <person name="Brover V.V."/>
            <person name="Troukhan M.E."/>
            <person name="Alexandrov N.A."/>
            <person name="Lu Y.-P."/>
            <person name="Flavell R.B."/>
            <person name="Feldmann K.A."/>
        </authorList>
    </citation>
    <scope>NUCLEOTIDE SEQUENCE [LARGE SCALE MRNA]</scope>
</reference>
<reference key="4">
    <citation type="journal article" date="2003" name="Mol. Biol. Evol.">
        <title>The basic helix-loop-helix transcription factor family in plants: a genome-wide study of protein structure and functional diversity.</title>
        <authorList>
            <person name="Heim M.A."/>
            <person name="Jakoby M."/>
            <person name="Werber M."/>
            <person name="Martin C."/>
            <person name="Weisshaar B."/>
            <person name="Bailey P.C."/>
        </authorList>
    </citation>
    <scope>NUCLEOTIDE SEQUENCE [MRNA] OF 120-270</scope>
    <scope>GENE FAMILY</scope>
    <scope>NOMENCLATURE</scope>
    <source>
        <strain>cv. Columbia</strain>
    </source>
</reference>
<reference key="5">
    <citation type="journal article" date="2003" name="Plant Cell">
        <title>The Arabidopsis basic/helix-loop-helix transcription factor family.</title>
        <authorList>
            <person name="Toledo-Ortiz G."/>
            <person name="Huq E."/>
            <person name="Quail P.H."/>
        </authorList>
    </citation>
    <scope>GENE FAMILY</scope>
</reference>
<reference key="6">
    <citation type="journal article" date="2003" name="Plant Cell">
        <title>Update on the basic helix-loop-helix transcription factor gene family in Arabidopsis thaliana.</title>
        <authorList>
            <person name="Bailey P.C."/>
            <person name="Martin C."/>
            <person name="Toledo-Ortiz G."/>
            <person name="Quail P.H."/>
            <person name="Huq E."/>
            <person name="Heim M.A."/>
            <person name="Jakoby M."/>
            <person name="Werber M."/>
            <person name="Weisshaar B."/>
        </authorList>
    </citation>
    <scope>GENE FAMILY</scope>
    <scope>NOMENCLATURE</scope>
</reference>